<comment type="function">
    <text evidence="1">Aspartyl-tRNA synthetase with relaxed tRNA specificity since it is able to aspartylate not only its cognate tRNA(Asp) but also tRNA(Asn). Reaction proceeds in two steps: L-aspartate is first activated by ATP to form Asp-AMP and then transferred to the acceptor end of tRNA(Asp/Asn).</text>
</comment>
<comment type="catalytic activity">
    <reaction evidence="1">
        <text>tRNA(Asx) + L-aspartate + ATP = L-aspartyl-tRNA(Asx) + AMP + diphosphate</text>
        <dbReference type="Rhea" id="RHEA:18349"/>
        <dbReference type="Rhea" id="RHEA-COMP:9710"/>
        <dbReference type="Rhea" id="RHEA-COMP:9711"/>
        <dbReference type="ChEBI" id="CHEBI:29991"/>
        <dbReference type="ChEBI" id="CHEBI:30616"/>
        <dbReference type="ChEBI" id="CHEBI:33019"/>
        <dbReference type="ChEBI" id="CHEBI:78442"/>
        <dbReference type="ChEBI" id="CHEBI:78516"/>
        <dbReference type="ChEBI" id="CHEBI:456215"/>
        <dbReference type="EC" id="6.1.1.23"/>
    </reaction>
</comment>
<comment type="subunit">
    <text evidence="1">Homodimer.</text>
</comment>
<comment type="subcellular location">
    <subcellularLocation>
        <location evidence="1">Cytoplasm</location>
    </subcellularLocation>
</comment>
<comment type="similarity">
    <text evidence="1">Belongs to the class-II aminoacyl-tRNA synthetase family. Type 1 subfamily.</text>
</comment>
<organism>
    <name type="scientific">Methylorubrum populi (strain ATCC BAA-705 / NCIMB 13946 / BJ001)</name>
    <name type="common">Methylobacterium populi</name>
    <dbReference type="NCBI Taxonomy" id="441620"/>
    <lineage>
        <taxon>Bacteria</taxon>
        <taxon>Pseudomonadati</taxon>
        <taxon>Pseudomonadota</taxon>
        <taxon>Alphaproteobacteria</taxon>
        <taxon>Hyphomicrobiales</taxon>
        <taxon>Methylobacteriaceae</taxon>
        <taxon>Methylorubrum</taxon>
    </lineage>
</organism>
<reference key="1">
    <citation type="submission" date="2008-04" db="EMBL/GenBank/DDBJ databases">
        <title>Complete sequence of chromosome of Methylobacterium populi BJ001.</title>
        <authorList>
            <consortium name="US DOE Joint Genome Institute"/>
            <person name="Copeland A."/>
            <person name="Lucas S."/>
            <person name="Lapidus A."/>
            <person name="Glavina del Rio T."/>
            <person name="Dalin E."/>
            <person name="Tice H."/>
            <person name="Bruce D."/>
            <person name="Goodwin L."/>
            <person name="Pitluck S."/>
            <person name="Chertkov O."/>
            <person name="Brettin T."/>
            <person name="Detter J.C."/>
            <person name="Han C."/>
            <person name="Kuske C.R."/>
            <person name="Schmutz J."/>
            <person name="Larimer F."/>
            <person name="Land M."/>
            <person name="Hauser L."/>
            <person name="Kyrpides N."/>
            <person name="Mikhailova N."/>
            <person name="Marx C."/>
            <person name="Richardson P."/>
        </authorList>
    </citation>
    <scope>NUCLEOTIDE SEQUENCE [LARGE SCALE GENOMIC DNA]</scope>
    <source>
        <strain>ATCC BAA-705 / NCIMB 13946 / BJ001</strain>
    </source>
</reference>
<feature type="chain" id="PRO_1000091014" description="Aspartate--tRNA(Asp/Asn) ligase">
    <location>
        <begin position="1"/>
        <end position="604"/>
    </location>
</feature>
<feature type="region of interest" description="Aspartate" evidence="1">
    <location>
        <begin position="199"/>
        <end position="202"/>
    </location>
</feature>
<feature type="binding site" evidence="1">
    <location>
        <position position="175"/>
    </location>
    <ligand>
        <name>L-aspartate</name>
        <dbReference type="ChEBI" id="CHEBI:29991"/>
    </ligand>
</feature>
<feature type="binding site" evidence="1">
    <location>
        <begin position="221"/>
        <end position="223"/>
    </location>
    <ligand>
        <name>ATP</name>
        <dbReference type="ChEBI" id="CHEBI:30616"/>
    </ligand>
</feature>
<feature type="binding site" evidence="1">
    <location>
        <position position="221"/>
    </location>
    <ligand>
        <name>L-aspartate</name>
        <dbReference type="ChEBI" id="CHEBI:29991"/>
    </ligand>
</feature>
<feature type="binding site" evidence="1">
    <location>
        <position position="456"/>
    </location>
    <ligand>
        <name>L-aspartate</name>
        <dbReference type="ChEBI" id="CHEBI:29991"/>
    </ligand>
</feature>
<feature type="binding site" evidence="1">
    <location>
        <position position="496"/>
    </location>
    <ligand>
        <name>ATP</name>
        <dbReference type="ChEBI" id="CHEBI:30616"/>
    </ligand>
</feature>
<feature type="binding site" evidence="1">
    <location>
        <position position="503"/>
    </location>
    <ligand>
        <name>L-aspartate</name>
        <dbReference type="ChEBI" id="CHEBI:29991"/>
    </ligand>
</feature>
<feature type="binding site" evidence="1">
    <location>
        <begin position="548"/>
        <end position="551"/>
    </location>
    <ligand>
        <name>ATP</name>
        <dbReference type="ChEBI" id="CHEBI:30616"/>
    </ligand>
</feature>
<feature type="site" description="Important for tRNA non-discrimination" evidence="1">
    <location>
        <position position="33"/>
    </location>
</feature>
<feature type="site" description="Important for tRNA non-discrimination" evidence="1">
    <location>
        <position position="83"/>
    </location>
</feature>
<name>SYDND_METPB</name>
<gene>
    <name evidence="1" type="primary">aspS</name>
    <name type="ordered locus">Mpop_4486</name>
</gene>
<sequence>MHRYRTHTCGALRPSDVGQTVRLSGWCHRIRDHGGVLFIDLRDHYGLTQCVIDSDSPAFKAAETARSEWVIRIDGRVRTRPAGTENAELPTGSVEVYIDDLEVLGPAGELPLPVFGDQEYPEETRLKYRFLDLRREKLHANIMKRGAIIDSLRRRMREGGFFEFQTPILTASSPEGARDYLVPSRVHPGKFYALPQAPQQFKQLTMIAGFDRYFQIAPCFRDEDARADRSPGEFYQLDIEMSFVTQEDVFQAVEPVLRGVFEEFANGKRVTKEFPRITYADAMLKYGVDKPDLRNPLIIADVTDEFADDAVEFKAFKGVIKSGGVVRAIPATGAAGQPRSFFDKLNDWARSEGAPGLGYIVFEEEGGALTGKGPIAKFIPPEIQARIAQKAGAKAGDAVFFAAGTEAKAAALAGKARIRIGDELKLSDTDQFAFCWVVDFPMYEWNEEDKKIDFSHNPFSMPNYDRDAFLALGEEDAEKILGIKAFQYDIVCNGIELSSGAIRNHRPDVMEKAFAIAGYGRDVLEEKFGGMLNALRLGAPPHGGIAPGVDRIVMLLCEEPNIREVVLFPMNQRAEDLMMGAPAEATPKQLRELHIRLNLPEKKG</sequence>
<accession>B1ZFX6</accession>
<proteinExistence type="inferred from homology"/>
<evidence type="ECO:0000255" key="1">
    <source>
        <dbReference type="HAMAP-Rule" id="MF_00044"/>
    </source>
</evidence>
<dbReference type="EC" id="6.1.1.23" evidence="1"/>
<dbReference type="EMBL" id="CP001029">
    <property type="protein sequence ID" value="ACB82585.1"/>
    <property type="molecule type" value="Genomic_DNA"/>
</dbReference>
<dbReference type="RefSeq" id="WP_012456189.1">
    <property type="nucleotide sequence ID" value="NC_010725.1"/>
</dbReference>
<dbReference type="SMR" id="B1ZFX6"/>
<dbReference type="STRING" id="441620.Mpop_4486"/>
<dbReference type="KEGG" id="mpo:Mpop_4486"/>
<dbReference type="eggNOG" id="COG0173">
    <property type="taxonomic scope" value="Bacteria"/>
</dbReference>
<dbReference type="HOGENOM" id="CLU_014330_3_2_5"/>
<dbReference type="OrthoDB" id="9802326at2"/>
<dbReference type="Proteomes" id="UP000007136">
    <property type="component" value="Chromosome"/>
</dbReference>
<dbReference type="GO" id="GO:0005737">
    <property type="term" value="C:cytoplasm"/>
    <property type="evidence" value="ECO:0007669"/>
    <property type="project" value="UniProtKB-SubCell"/>
</dbReference>
<dbReference type="GO" id="GO:0004815">
    <property type="term" value="F:aspartate-tRNA ligase activity"/>
    <property type="evidence" value="ECO:0007669"/>
    <property type="project" value="UniProtKB-UniRule"/>
</dbReference>
<dbReference type="GO" id="GO:0050560">
    <property type="term" value="F:aspartate-tRNA(Asn) ligase activity"/>
    <property type="evidence" value="ECO:0007669"/>
    <property type="project" value="UniProtKB-EC"/>
</dbReference>
<dbReference type="GO" id="GO:0005524">
    <property type="term" value="F:ATP binding"/>
    <property type="evidence" value="ECO:0007669"/>
    <property type="project" value="UniProtKB-UniRule"/>
</dbReference>
<dbReference type="GO" id="GO:0003676">
    <property type="term" value="F:nucleic acid binding"/>
    <property type="evidence" value="ECO:0007669"/>
    <property type="project" value="InterPro"/>
</dbReference>
<dbReference type="GO" id="GO:0006422">
    <property type="term" value="P:aspartyl-tRNA aminoacylation"/>
    <property type="evidence" value="ECO:0007669"/>
    <property type="project" value="UniProtKB-UniRule"/>
</dbReference>
<dbReference type="CDD" id="cd00777">
    <property type="entry name" value="AspRS_core"/>
    <property type="match status" value="1"/>
</dbReference>
<dbReference type="CDD" id="cd04317">
    <property type="entry name" value="EcAspRS_like_N"/>
    <property type="match status" value="1"/>
</dbReference>
<dbReference type="Gene3D" id="3.30.930.10">
    <property type="entry name" value="Bira Bifunctional Protein, Domain 2"/>
    <property type="match status" value="1"/>
</dbReference>
<dbReference type="Gene3D" id="3.30.1360.30">
    <property type="entry name" value="GAD-like domain"/>
    <property type="match status" value="1"/>
</dbReference>
<dbReference type="Gene3D" id="2.40.50.140">
    <property type="entry name" value="Nucleic acid-binding proteins"/>
    <property type="match status" value="1"/>
</dbReference>
<dbReference type="HAMAP" id="MF_00044">
    <property type="entry name" value="Asp_tRNA_synth_type1"/>
    <property type="match status" value="1"/>
</dbReference>
<dbReference type="InterPro" id="IPR004364">
    <property type="entry name" value="Aa-tRNA-synt_II"/>
</dbReference>
<dbReference type="InterPro" id="IPR006195">
    <property type="entry name" value="aa-tRNA-synth_II"/>
</dbReference>
<dbReference type="InterPro" id="IPR045864">
    <property type="entry name" value="aa-tRNA-synth_II/BPL/LPL"/>
</dbReference>
<dbReference type="InterPro" id="IPR004524">
    <property type="entry name" value="Asp-tRNA-ligase_1"/>
</dbReference>
<dbReference type="InterPro" id="IPR047089">
    <property type="entry name" value="Asp-tRNA-ligase_1_N"/>
</dbReference>
<dbReference type="InterPro" id="IPR002312">
    <property type="entry name" value="Asp/Asn-tRNA-synth_IIb"/>
</dbReference>
<dbReference type="InterPro" id="IPR047090">
    <property type="entry name" value="AspRS_core"/>
</dbReference>
<dbReference type="InterPro" id="IPR004115">
    <property type="entry name" value="GAD-like_sf"/>
</dbReference>
<dbReference type="InterPro" id="IPR029351">
    <property type="entry name" value="GAD_dom"/>
</dbReference>
<dbReference type="InterPro" id="IPR012340">
    <property type="entry name" value="NA-bd_OB-fold"/>
</dbReference>
<dbReference type="InterPro" id="IPR004365">
    <property type="entry name" value="NA-bd_OB_tRNA"/>
</dbReference>
<dbReference type="NCBIfam" id="TIGR00459">
    <property type="entry name" value="aspS_bact"/>
    <property type="match status" value="1"/>
</dbReference>
<dbReference type="NCBIfam" id="NF001750">
    <property type="entry name" value="PRK00476.1"/>
    <property type="match status" value="1"/>
</dbReference>
<dbReference type="PANTHER" id="PTHR22594:SF5">
    <property type="entry name" value="ASPARTATE--TRNA LIGASE, MITOCHONDRIAL"/>
    <property type="match status" value="1"/>
</dbReference>
<dbReference type="PANTHER" id="PTHR22594">
    <property type="entry name" value="ASPARTYL/LYSYL-TRNA SYNTHETASE"/>
    <property type="match status" value="1"/>
</dbReference>
<dbReference type="Pfam" id="PF02938">
    <property type="entry name" value="GAD"/>
    <property type="match status" value="1"/>
</dbReference>
<dbReference type="Pfam" id="PF00152">
    <property type="entry name" value="tRNA-synt_2"/>
    <property type="match status" value="1"/>
</dbReference>
<dbReference type="Pfam" id="PF01336">
    <property type="entry name" value="tRNA_anti-codon"/>
    <property type="match status" value="1"/>
</dbReference>
<dbReference type="PRINTS" id="PR01042">
    <property type="entry name" value="TRNASYNTHASP"/>
</dbReference>
<dbReference type="SUPFAM" id="SSF55681">
    <property type="entry name" value="Class II aaRS and biotin synthetases"/>
    <property type="match status" value="1"/>
</dbReference>
<dbReference type="SUPFAM" id="SSF55261">
    <property type="entry name" value="GAD domain-like"/>
    <property type="match status" value="1"/>
</dbReference>
<dbReference type="SUPFAM" id="SSF50249">
    <property type="entry name" value="Nucleic acid-binding proteins"/>
    <property type="match status" value="1"/>
</dbReference>
<dbReference type="PROSITE" id="PS50862">
    <property type="entry name" value="AA_TRNA_LIGASE_II"/>
    <property type="match status" value="1"/>
</dbReference>
<keyword id="KW-0030">Aminoacyl-tRNA synthetase</keyword>
<keyword id="KW-0067">ATP-binding</keyword>
<keyword id="KW-0963">Cytoplasm</keyword>
<keyword id="KW-0436">Ligase</keyword>
<keyword id="KW-0547">Nucleotide-binding</keyword>
<keyword id="KW-0648">Protein biosynthesis</keyword>
<protein>
    <recommendedName>
        <fullName evidence="1">Aspartate--tRNA(Asp/Asn) ligase</fullName>
        <ecNumber evidence="1">6.1.1.23</ecNumber>
    </recommendedName>
    <alternativeName>
        <fullName evidence="1">Aspartyl-tRNA synthetase</fullName>
        <shortName evidence="1">AspRS</shortName>
    </alternativeName>
    <alternativeName>
        <fullName evidence="1">Non-discriminating aspartyl-tRNA synthetase</fullName>
        <shortName evidence="1">ND-AspRS</shortName>
    </alternativeName>
</protein>